<gene>
    <name evidence="1" type="primary">lpxK</name>
    <name type="ordered locus">BT_0296</name>
</gene>
<protein>
    <recommendedName>
        <fullName evidence="1">Tetraacyldisaccharide 4'-kinase</fullName>
        <ecNumber evidence="1">2.7.1.130</ecNumber>
    </recommendedName>
    <alternativeName>
        <fullName evidence="1">Lipid A 4'-kinase</fullName>
    </alternativeName>
</protein>
<accession>A9IN76</accession>
<reference key="1">
    <citation type="journal article" date="2007" name="Nat. Genet.">
        <title>Genomic analysis of Bartonella identifies type IV secretion systems as host adaptability factors.</title>
        <authorList>
            <person name="Saenz H.L."/>
            <person name="Engel P."/>
            <person name="Stoeckli M.C."/>
            <person name="Lanz C."/>
            <person name="Raddatz G."/>
            <person name="Vayssier-Taussat M."/>
            <person name="Birtles R."/>
            <person name="Schuster S.C."/>
            <person name="Dehio C."/>
        </authorList>
    </citation>
    <scope>NUCLEOTIDE SEQUENCE [LARGE SCALE GENOMIC DNA]</scope>
    <source>
        <strain>CIP 105476 / IBS 506</strain>
    </source>
</reference>
<dbReference type="EC" id="2.7.1.130" evidence="1"/>
<dbReference type="EMBL" id="AM260525">
    <property type="protein sequence ID" value="CAK00762.1"/>
    <property type="molecule type" value="Genomic_DNA"/>
</dbReference>
<dbReference type="RefSeq" id="WP_012230734.1">
    <property type="nucleotide sequence ID" value="NC_010161.1"/>
</dbReference>
<dbReference type="SMR" id="A9IN76"/>
<dbReference type="KEGG" id="btr:BT_0296"/>
<dbReference type="eggNOG" id="COG1663">
    <property type="taxonomic scope" value="Bacteria"/>
</dbReference>
<dbReference type="HOGENOM" id="CLU_038816_0_0_5"/>
<dbReference type="UniPathway" id="UPA00359">
    <property type="reaction ID" value="UER00482"/>
</dbReference>
<dbReference type="Proteomes" id="UP000001592">
    <property type="component" value="Chromosome"/>
</dbReference>
<dbReference type="GO" id="GO:0005886">
    <property type="term" value="C:plasma membrane"/>
    <property type="evidence" value="ECO:0007669"/>
    <property type="project" value="TreeGrafter"/>
</dbReference>
<dbReference type="GO" id="GO:0005524">
    <property type="term" value="F:ATP binding"/>
    <property type="evidence" value="ECO:0007669"/>
    <property type="project" value="UniProtKB-UniRule"/>
</dbReference>
<dbReference type="GO" id="GO:0009029">
    <property type="term" value="F:tetraacyldisaccharide 4'-kinase activity"/>
    <property type="evidence" value="ECO:0007669"/>
    <property type="project" value="UniProtKB-UniRule"/>
</dbReference>
<dbReference type="GO" id="GO:0009245">
    <property type="term" value="P:lipid A biosynthetic process"/>
    <property type="evidence" value="ECO:0007669"/>
    <property type="project" value="UniProtKB-UniRule"/>
</dbReference>
<dbReference type="GO" id="GO:0009244">
    <property type="term" value="P:lipopolysaccharide core region biosynthetic process"/>
    <property type="evidence" value="ECO:0007669"/>
    <property type="project" value="TreeGrafter"/>
</dbReference>
<dbReference type="HAMAP" id="MF_00409">
    <property type="entry name" value="LpxK"/>
    <property type="match status" value="1"/>
</dbReference>
<dbReference type="InterPro" id="IPR003758">
    <property type="entry name" value="LpxK"/>
</dbReference>
<dbReference type="InterPro" id="IPR027417">
    <property type="entry name" value="P-loop_NTPase"/>
</dbReference>
<dbReference type="NCBIfam" id="TIGR00682">
    <property type="entry name" value="lpxK"/>
    <property type="match status" value="1"/>
</dbReference>
<dbReference type="PANTHER" id="PTHR42724">
    <property type="entry name" value="TETRAACYLDISACCHARIDE 4'-KINASE"/>
    <property type="match status" value="1"/>
</dbReference>
<dbReference type="PANTHER" id="PTHR42724:SF1">
    <property type="entry name" value="TETRAACYLDISACCHARIDE 4'-KINASE, MITOCHONDRIAL-RELATED"/>
    <property type="match status" value="1"/>
</dbReference>
<dbReference type="Pfam" id="PF02606">
    <property type="entry name" value="LpxK"/>
    <property type="match status" value="1"/>
</dbReference>
<dbReference type="SUPFAM" id="SSF52540">
    <property type="entry name" value="P-loop containing nucleoside triphosphate hydrolases"/>
    <property type="match status" value="1"/>
</dbReference>
<keyword id="KW-0067">ATP-binding</keyword>
<keyword id="KW-0418">Kinase</keyword>
<keyword id="KW-0441">Lipid A biosynthesis</keyword>
<keyword id="KW-0444">Lipid biosynthesis</keyword>
<keyword id="KW-0443">Lipid metabolism</keyword>
<keyword id="KW-0547">Nucleotide-binding</keyword>
<keyword id="KW-0808">Transferase</keyword>
<feature type="chain" id="PRO_1000080458" description="Tetraacyldisaccharide 4'-kinase">
    <location>
        <begin position="1"/>
        <end position="346"/>
    </location>
</feature>
<feature type="binding site" evidence="1">
    <location>
        <begin position="53"/>
        <end position="60"/>
    </location>
    <ligand>
        <name>ATP</name>
        <dbReference type="ChEBI" id="CHEBI:30616"/>
    </ligand>
</feature>
<evidence type="ECO:0000255" key="1">
    <source>
        <dbReference type="HAMAP-Rule" id="MF_00409"/>
    </source>
</evidence>
<sequence length="346" mass="38802">MHISAPHFWWKNKSFLRFLLAPISWGYGYFSCRFMGRQPPVIDLPVLCIGNFTCGGTGKTPVVIAFAKVAKELGFVPGVVSRGYGGAVKGVHLVNEKYDTARDVGDEALLLAQHAFVAVSANRYAAAQRLKKEGCNLILMDDGFQSRRLYMDYTLLVVDAMRGFGNGAVFPAGPLRVPLKTQFSFMDSVLLIGHSDARDNVSFLIARTGKPLHRAHLKARASDEVAGKSFLAFAGIGNPDKFFQSIKELSGHVVQTYTYPDHYFFTDKNLTSLVQKAQMYNLWLATTAKDYIRIQTIHERKDLKNLIVFDVDVDFVQKDFCRMLLEEVITRFRKRSCEFSCAKGKG</sequence>
<comment type="function">
    <text evidence="1">Transfers the gamma-phosphate of ATP to the 4'-position of a tetraacyldisaccharide 1-phosphate intermediate (termed DS-1-P) to form tetraacyldisaccharide 1,4'-bis-phosphate (lipid IVA).</text>
</comment>
<comment type="catalytic activity">
    <reaction evidence="1">
        <text>a lipid A disaccharide + ATP = a lipid IVA + ADP + H(+)</text>
        <dbReference type="Rhea" id="RHEA:67840"/>
        <dbReference type="ChEBI" id="CHEBI:15378"/>
        <dbReference type="ChEBI" id="CHEBI:30616"/>
        <dbReference type="ChEBI" id="CHEBI:176343"/>
        <dbReference type="ChEBI" id="CHEBI:176425"/>
        <dbReference type="ChEBI" id="CHEBI:456216"/>
        <dbReference type="EC" id="2.7.1.130"/>
    </reaction>
</comment>
<comment type="pathway">
    <text evidence="1">Glycolipid biosynthesis; lipid IV(A) biosynthesis; lipid IV(A) from (3R)-3-hydroxytetradecanoyl-[acyl-carrier-protein] and UDP-N-acetyl-alpha-D-glucosamine: step 6/6.</text>
</comment>
<comment type="similarity">
    <text evidence="1">Belongs to the LpxK family.</text>
</comment>
<proteinExistence type="inferred from homology"/>
<organism>
    <name type="scientific">Bartonella tribocorum (strain CIP 105476 / IBS 506)</name>
    <dbReference type="NCBI Taxonomy" id="382640"/>
    <lineage>
        <taxon>Bacteria</taxon>
        <taxon>Pseudomonadati</taxon>
        <taxon>Pseudomonadota</taxon>
        <taxon>Alphaproteobacteria</taxon>
        <taxon>Hyphomicrobiales</taxon>
        <taxon>Bartonellaceae</taxon>
        <taxon>Bartonella</taxon>
    </lineage>
</organism>
<name>LPXK_BART1</name>